<dbReference type="EMBL" id="AJ720434">
    <property type="protein sequence ID" value="CAG32093.1"/>
    <property type="molecule type" value="mRNA"/>
</dbReference>
<dbReference type="RefSeq" id="NP_001006532.1">
    <property type="nucleotide sequence ID" value="NM_001006532.1"/>
</dbReference>
<dbReference type="RefSeq" id="XP_015145772.1">
    <property type="nucleotide sequence ID" value="XM_015290286.1"/>
</dbReference>
<dbReference type="SMR" id="Q5ZJK0"/>
<dbReference type="FunCoup" id="Q5ZJK0">
    <property type="interactions" value="941"/>
</dbReference>
<dbReference type="STRING" id="9031.ENSGALP00000006783"/>
<dbReference type="GlyGen" id="Q5ZJK0">
    <property type="glycosylation" value="1 site"/>
</dbReference>
<dbReference type="PaxDb" id="9031-ENSGALP00000006783"/>
<dbReference type="Ensembl" id="ENSGALT00010026838.1">
    <property type="protein sequence ID" value="ENSGALP00010015293.1"/>
    <property type="gene ID" value="ENSGALG00010011239.1"/>
</dbReference>
<dbReference type="GeneID" id="424429"/>
<dbReference type="KEGG" id="gga:424429"/>
<dbReference type="CTD" id="55103"/>
<dbReference type="VEuPathDB" id="HostDB:geneid_424429"/>
<dbReference type="eggNOG" id="KOG3417">
    <property type="taxonomic scope" value="Eukaryota"/>
</dbReference>
<dbReference type="GeneTree" id="ENSGT00940000154079"/>
<dbReference type="HOGENOM" id="CLU_021333_0_1_1"/>
<dbReference type="InParanoid" id="Q5ZJK0"/>
<dbReference type="OrthoDB" id="546434at2759"/>
<dbReference type="PhylomeDB" id="Q5ZJK0"/>
<dbReference type="TreeFam" id="TF352150"/>
<dbReference type="PRO" id="PR:Q5ZJK0"/>
<dbReference type="Proteomes" id="UP000000539">
    <property type="component" value="Chromosome 8"/>
</dbReference>
<dbReference type="Bgee" id="ENSGALG00000004273">
    <property type="expression patterns" value="Expressed in spermatid and 13 other cell types or tissues"/>
</dbReference>
<dbReference type="GO" id="GO:0005737">
    <property type="term" value="C:cytoplasm"/>
    <property type="evidence" value="ECO:0007669"/>
    <property type="project" value="UniProtKB-SubCell"/>
</dbReference>
<dbReference type="GO" id="GO:0005886">
    <property type="term" value="C:plasma membrane"/>
    <property type="evidence" value="ECO:0000318"/>
    <property type="project" value="GO_Central"/>
</dbReference>
<dbReference type="GO" id="GO:0005085">
    <property type="term" value="F:guanyl-nucleotide exchange factor activity"/>
    <property type="evidence" value="ECO:0000318"/>
    <property type="project" value="GO_Central"/>
</dbReference>
<dbReference type="GO" id="GO:0007265">
    <property type="term" value="P:Ras protein signal transduction"/>
    <property type="evidence" value="ECO:0000318"/>
    <property type="project" value="GO_Central"/>
</dbReference>
<dbReference type="CDD" id="cd13310">
    <property type="entry name" value="PH_RalGPS1_2"/>
    <property type="match status" value="1"/>
</dbReference>
<dbReference type="CDD" id="cd00155">
    <property type="entry name" value="RasGEF"/>
    <property type="match status" value="1"/>
</dbReference>
<dbReference type="FunFam" id="1.10.840.10:FF:000010">
    <property type="entry name" value="ras-specific guanine nucleotide-releasing factor RalGPS1 isoform X1"/>
    <property type="match status" value="1"/>
</dbReference>
<dbReference type="Gene3D" id="2.30.29.30">
    <property type="entry name" value="Pleckstrin-homology domain (PH domain)/Phosphotyrosine-binding domain (PTB)"/>
    <property type="match status" value="1"/>
</dbReference>
<dbReference type="Gene3D" id="1.10.840.10">
    <property type="entry name" value="Ras guanine-nucleotide exchange factors catalytic domain"/>
    <property type="match status" value="1"/>
</dbReference>
<dbReference type="InterPro" id="IPR011993">
    <property type="entry name" value="PH-like_dom_sf"/>
</dbReference>
<dbReference type="InterPro" id="IPR001849">
    <property type="entry name" value="PH_domain"/>
</dbReference>
<dbReference type="InterPro" id="IPR008937">
    <property type="entry name" value="Ras-like_GEF"/>
</dbReference>
<dbReference type="InterPro" id="IPR023578">
    <property type="entry name" value="Ras_GEF_dom_sf"/>
</dbReference>
<dbReference type="InterPro" id="IPR001895">
    <property type="entry name" value="RASGEF_cat_dom"/>
</dbReference>
<dbReference type="InterPro" id="IPR036964">
    <property type="entry name" value="RASGEF_cat_dom_sf"/>
</dbReference>
<dbReference type="PANTHER" id="PTHR23113">
    <property type="entry name" value="GUANINE NUCLEOTIDE EXCHANGE FACTOR"/>
    <property type="match status" value="1"/>
</dbReference>
<dbReference type="PANTHER" id="PTHR23113:SF357">
    <property type="entry name" value="RAS-SPECIFIC GUANINE NUCLEOTIDE-RELEASING FACTOR RALGPS2"/>
    <property type="match status" value="1"/>
</dbReference>
<dbReference type="Pfam" id="PF00169">
    <property type="entry name" value="PH"/>
    <property type="match status" value="1"/>
</dbReference>
<dbReference type="Pfam" id="PF00617">
    <property type="entry name" value="RasGEF"/>
    <property type="match status" value="1"/>
</dbReference>
<dbReference type="SMART" id="SM00233">
    <property type="entry name" value="PH"/>
    <property type="match status" value="1"/>
</dbReference>
<dbReference type="SMART" id="SM00147">
    <property type="entry name" value="RasGEF"/>
    <property type="match status" value="1"/>
</dbReference>
<dbReference type="SUPFAM" id="SSF50729">
    <property type="entry name" value="PH domain-like"/>
    <property type="match status" value="1"/>
</dbReference>
<dbReference type="SUPFAM" id="SSF48366">
    <property type="entry name" value="Ras GEF"/>
    <property type="match status" value="1"/>
</dbReference>
<dbReference type="PROSITE" id="PS50003">
    <property type="entry name" value="PH_DOMAIN"/>
    <property type="match status" value="1"/>
</dbReference>
<dbReference type="PROSITE" id="PS50009">
    <property type="entry name" value="RASGEF_CAT"/>
    <property type="match status" value="1"/>
</dbReference>
<keyword id="KW-1003">Cell membrane</keyword>
<keyword id="KW-0963">Cytoplasm</keyword>
<keyword id="KW-0344">Guanine-nucleotide releasing factor</keyword>
<keyword id="KW-0472">Membrane</keyword>
<keyword id="KW-1185">Reference proteome</keyword>
<name>RGPS1_CHICK</name>
<accession>Q5ZJK0</accession>
<evidence type="ECO:0000250" key="1"/>
<evidence type="ECO:0000255" key="2">
    <source>
        <dbReference type="PROSITE-ProRule" id="PRU00145"/>
    </source>
</evidence>
<evidence type="ECO:0000255" key="3">
    <source>
        <dbReference type="PROSITE-ProRule" id="PRU00168"/>
    </source>
</evidence>
<evidence type="ECO:0000256" key="4">
    <source>
        <dbReference type="SAM" id="MobiDB-lite"/>
    </source>
</evidence>
<organism>
    <name type="scientific">Gallus gallus</name>
    <name type="common">Chicken</name>
    <dbReference type="NCBI Taxonomy" id="9031"/>
    <lineage>
        <taxon>Eukaryota</taxon>
        <taxon>Metazoa</taxon>
        <taxon>Chordata</taxon>
        <taxon>Craniata</taxon>
        <taxon>Vertebrata</taxon>
        <taxon>Euteleostomi</taxon>
        <taxon>Archelosauria</taxon>
        <taxon>Archosauria</taxon>
        <taxon>Dinosauria</taxon>
        <taxon>Saurischia</taxon>
        <taxon>Theropoda</taxon>
        <taxon>Coelurosauria</taxon>
        <taxon>Aves</taxon>
        <taxon>Neognathae</taxon>
        <taxon>Galloanserae</taxon>
        <taxon>Galliformes</taxon>
        <taxon>Phasianidae</taxon>
        <taxon>Phasianinae</taxon>
        <taxon>Gallus</taxon>
    </lineage>
</organism>
<feature type="chain" id="PRO_0000333194" description="Ras-specific guanine nucleotide-releasing factor RalGPS1">
    <location>
        <begin position="1"/>
        <end position="584"/>
    </location>
</feature>
<feature type="domain" description="Ras-GEF" evidence="3">
    <location>
        <begin position="50"/>
        <end position="288"/>
    </location>
</feature>
<feature type="domain" description="PH" evidence="2">
    <location>
        <begin position="458"/>
        <end position="570"/>
    </location>
</feature>
<feature type="region of interest" description="Disordered" evidence="4">
    <location>
        <begin position="1"/>
        <end position="29"/>
    </location>
</feature>
<feature type="region of interest" description="Disordered" evidence="4">
    <location>
        <begin position="285"/>
        <end position="338"/>
    </location>
</feature>
<feature type="region of interest" description="Disordered" evidence="4">
    <location>
        <begin position="380"/>
        <end position="407"/>
    </location>
</feature>
<feature type="short sequence motif" description="PXXP">
    <location>
        <begin position="326"/>
        <end position="329"/>
    </location>
</feature>
<feature type="compositionally biased region" description="Polar residues" evidence="4">
    <location>
        <begin position="1"/>
        <end position="13"/>
    </location>
</feature>
<feature type="compositionally biased region" description="Low complexity" evidence="4">
    <location>
        <begin position="14"/>
        <end position="26"/>
    </location>
</feature>
<feature type="compositionally biased region" description="Low complexity" evidence="4">
    <location>
        <begin position="388"/>
        <end position="404"/>
    </location>
</feature>
<reference key="1">
    <citation type="journal article" date="2005" name="Genome Biol.">
        <title>Full-length cDNAs from chicken bursal lymphocytes to facilitate gene function analysis.</title>
        <authorList>
            <person name="Caldwell R.B."/>
            <person name="Kierzek A.M."/>
            <person name="Arakawa H."/>
            <person name="Bezzubov Y."/>
            <person name="Zaim J."/>
            <person name="Fiedler P."/>
            <person name="Kutter S."/>
            <person name="Blagodatski A."/>
            <person name="Kostovska D."/>
            <person name="Koter M."/>
            <person name="Plachy J."/>
            <person name="Carninci P."/>
            <person name="Hayashizaki Y."/>
            <person name="Buerstedde J.-M."/>
        </authorList>
    </citation>
    <scope>NUCLEOTIDE SEQUENCE [LARGE SCALE MRNA]</scope>
    <source>
        <strain>CB</strain>
        <tissue>Bursa of Fabricius</tissue>
    </source>
</reference>
<gene>
    <name type="primary">RALGPS1</name>
    <name type="ORF">RCJMB04_17i24</name>
</gene>
<proteinExistence type="evidence at transcript level"/>
<comment type="function">
    <text evidence="1">Guanine nucleotide exchange factor. May be involved in cytoskeletal organization.</text>
</comment>
<comment type="subcellular location">
    <subcellularLocation>
        <location evidence="1">Cytoplasm</location>
    </subcellularLocation>
    <subcellularLocation>
        <location evidence="1">Cell membrane</location>
    </subcellularLocation>
    <text evidence="1">Associated with membranes through the PH domain.</text>
</comment>
<comment type="domain">
    <text evidence="1">The PH domain mediates binding to membranes.</text>
</comment>
<protein>
    <recommendedName>
        <fullName>Ras-specific guanine nucleotide-releasing factor RalGPS1</fullName>
    </recommendedName>
    <alternativeName>
        <fullName>Ral GEF with PH domain and SH3-binding motif 1</fullName>
    </alternativeName>
    <alternativeName>
        <fullName>RalA exchange factor RalGPS1</fullName>
    </alternativeName>
</protein>
<sequence>MDLMNGQSSSVNIAATASEKSSSSESLSDKGSAELKKSFDAVVFDVLKVTPEEYAGQITLMDVPVFKAIQPEELASCGWNKKEKYSSAPNAVAFTRRFNHVSFWVVREILHAQTLKIRAEVLSHYIKTAKKLYELNNLHALMAVVSGLQSAPIFRLTKTWALLSRKDKATFEKLEYVMSKEDNYKRLRDYISSLKMTPCIPYLGIYLSDLTYIDSAYPSTGSILESEQRTNLMNNILRIISDLQQSCEYDIPLLPHVQKYLNSVQYIEELQKFVEDDNYKLSLKIEPGTSTPHSAASREDLVASEVGASPQSGRKNAAAEGALLPPTPPSPRNLIPHGHRKCHSLGYNFIHKMNTAEFKSATFPNAGPRHLLDDSVMEPHVPSRGQAESSTLSSGISIGSSDGSELSEETSWPAFERNRLYHSLGPGTRVSRNGYRGHMKASSSLESEDLAVHLYPGAVTIQGVLRRKTLLKEGKKPTVASWTKYWVALCGTQLFYYAAKSLKATERKHFKSTPSKNVSVVGWMVMMADDPEHPDLFLLTDSEKGNSYKFQAGNRMNAMLWFKHLSAACQSNRQQVPANLMTFE</sequence>